<name>DNAK_BEII9</name>
<dbReference type="EMBL" id="CP001016">
    <property type="protein sequence ID" value="ACB93786.1"/>
    <property type="molecule type" value="Genomic_DNA"/>
</dbReference>
<dbReference type="RefSeq" id="WP_012383144.1">
    <property type="nucleotide sequence ID" value="NC_010581.1"/>
</dbReference>
<dbReference type="SMR" id="B2IBR4"/>
<dbReference type="STRING" id="395963.Bind_0128"/>
<dbReference type="KEGG" id="bid:Bind_0128"/>
<dbReference type="eggNOG" id="COG0443">
    <property type="taxonomic scope" value="Bacteria"/>
</dbReference>
<dbReference type="HOGENOM" id="CLU_005965_2_1_5"/>
<dbReference type="OrthoDB" id="9766019at2"/>
<dbReference type="Proteomes" id="UP000001695">
    <property type="component" value="Chromosome"/>
</dbReference>
<dbReference type="GO" id="GO:0005524">
    <property type="term" value="F:ATP binding"/>
    <property type="evidence" value="ECO:0007669"/>
    <property type="project" value="UniProtKB-UniRule"/>
</dbReference>
<dbReference type="GO" id="GO:0140662">
    <property type="term" value="F:ATP-dependent protein folding chaperone"/>
    <property type="evidence" value="ECO:0007669"/>
    <property type="project" value="InterPro"/>
</dbReference>
<dbReference type="GO" id="GO:0051082">
    <property type="term" value="F:unfolded protein binding"/>
    <property type="evidence" value="ECO:0007669"/>
    <property type="project" value="InterPro"/>
</dbReference>
<dbReference type="CDD" id="cd11733">
    <property type="entry name" value="ASKHA_NBD_HSP70_HSPA9"/>
    <property type="match status" value="1"/>
</dbReference>
<dbReference type="FunFam" id="2.60.34.10:FF:000014">
    <property type="entry name" value="Chaperone protein DnaK HSP70"/>
    <property type="match status" value="1"/>
</dbReference>
<dbReference type="FunFam" id="3.30.420.40:FF:000020">
    <property type="entry name" value="Chaperone protein HscA homolog"/>
    <property type="match status" value="1"/>
</dbReference>
<dbReference type="FunFam" id="3.30.30.30:FF:000003">
    <property type="entry name" value="Heat shock protein 9"/>
    <property type="match status" value="1"/>
</dbReference>
<dbReference type="FunFam" id="1.20.1270.10:FF:000001">
    <property type="entry name" value="Molecular chaperone DnaK"/>
    <property type="match status" value="1"/>
</dbReference>
<dbReference type="FunFam" id="3.30.420.40:FF:000004">
    <property type="entry name" value="Molecular chaperone DnaK"/>
    <property type="match status" value="1"/>
</dbReference>
<dbReference type="FunFam" id="3.90.640.10:FF:000003">
    <property type="entry name" value="Molecular chaperone DnaK"/>
    <property type="match status" value="1"/>
</dbReference>
<dbReference type="Gene3D" id="1.20.1270.10">
    <property type="match status" value="1"/>
</dbReference>
<dbReference type="Gene3D" id="3.30.420.40">
    <property type="match status" value="2"/>
</dbReference>
<dbReference type="Gene3D" id="3.90.640.10">
    <property type="entry name" value="Actin, Chain A, domain 4"/>
    <property type="match status" value="1"/>
</dbReference>
<dbReference type="Gene3D" id="2.60.34.10">
    <property type="entry name" value="Substrate Binding Domain Of DNAk, Chain A, domain 1"/>
    <property type="match status" value="1"/>
</dbReference>
<dbReference type="HAMAP" id="MF_00332">
    <property type="entry name" value="DnaK"/>
    <property type="match status" value="1"/>
</dbReference>
<dbReference type="InterPro" id="IPR043129">
    <property type="entry name" value="ATPase_NBD"/>
</dbReference>
<dbReference type="InterPro" id="IPR012725">
    <property type="entry name" value="Chaperone_DnaK"/>
</dbReference>
<dbReference type="InterPro" id="IPR018181">
    <property type="entry name" value="Heat_shock_70_CS"/>
</dbReference>
<dbReference type="InterPro" id="IPR029048">
    <property type="entry name" value="HSP70_C_sf"/>
</dbReference>
<dbReference type="InterPro" id="IPR029047">
    <property type="entry name" value="HSP70_peptide-bd_sf"/>
</dbReference>
<dbReference type="InterPro" id="IPR013126">
    <property type="entry name" value="Hsp_70_fam"/>
</dbReference>
<dbReference type="NCBIfam" id="NF001413">
    <property type="entry name" value="PRK00290.1"/>
    <property type="match status" value="1"/>
</dbReference>
<dbReference type="NCBIfam" id="NF003520">
    <property type="entry name" value="PRK05183.1"/>
    <property type="match status" value="1"/>
</dbReference>
<dbReference type="NCBIfam" id="TIGR02350">
    <property type="entry name" value="prok_dnaK"/>
    <property type="match status" value="1"/>
</dbReference>
<dbReference type="PANTHER" id="PTHR19375">
    <property type="entry name" value="HEAT SHOCK PROTEIN 70KDA"/>
    <property type="match status" value="1"/>
</dbReference>
<dbReference type="Pfam" id="PF00012">
    <property type="entry name" value="HSP70"/>
    <property type="match status" value="1"/>
</dbReference>
<dbReference type="PRINTS" id="PR00301">
    <property type="entry name" value="HEATSHOCK70"/>
</dbReference>
<dbReference type="SUPFAM" id="SSF53067">
    <property type="entry name" value="Actin-like ATPase domain"/>
    <property type="match status" value="2"/>
</dbReference>
<dbReference type="SUPFAM" id="SSF100934">
    <property type="entry name" value="Heat shock protein 70kD (HSP70), C-terminal subdomain"/>
    <property type="match status" value="1"/>
</dbReference>
<dbReference type="SUPFAM" id="SSF100920">
    <property type="entry name" value="Heat shock protein 70kD (HSP70), peptide-binding domain"/>
    <property type="match status" value="1"/>
</dbReference>
<dbReference type="PROSITE" id="PS00297">
    <property type="entry name" value="HSP70_1"/>
    <property type="match status" value="1"/>
</dbReference>
<dbReference type="PROSITE" id="PS00329">
    <property type="entry name" value="HSP70_2"/>
    <property type="match status" value="1"/>
</dbReference>
<dbReference type="PROSITE" id="PS01036">
    <property type="entry name" value="HSP70_3"/>
    <property type="match status" value="1"/>
</dbReference>
<reference key="1">
    <citation type="journal article" date="2010" name="J. Bacteriol.">
        <title>Complete genome sequence of Beijerinckia indica subsp. indica.</title>
        <authorList>
            <person name="Tamas I."/>
            <person name="Dedysh S.N."/>
            <person name="Liesack W."/>
            <person name="Stott M.B."/>
            <person name="Alam M."/>
            <person name="Murrell J.C."/>
            <person name="Dunfield P.F."/>
        </authorList>
    </citation>
    <scope>NUCLEOTIDE SEQUENCE [LARGE SCALE GENOMIC DNA]</scope>
    <source>
        <strain>ATCC 9039 / DSM 1715 / NCIMB 8712</strain>
    </source>
</reference>
<feature type="chain" id="PRO_1000119670" description="Chaperone protein DnaK">
    <location>
        <begin position="1"/>
        <end position="632"/>
    </location>
</feature>
<feature type="region of interest" description="Disordered" evidence="2">
    <location>
        <begin position="601"/>
        <end position="632"/>
    </location>
</feature>
<feature type="compositionally biased region" description="Basic and acidic residues" evidence="2">
    <location>
        <begin position="609"/>
        <end position="632"/>
    </location>
</feature>
<feature type="modified residue" description="Phosphothreonine; by autocatalysis" evidence="1">
    <location>
        <position position="198"/>
    </location>
</feature>
<evidence type="ECO:0000255" key="1">
    <source>
        <dbReference type="HAMAP-Rule" id="MF_00332"/>
    </source>
</evidence>
<evidence type="ECO:0000256" key="2">
    <source>
        <dbReference type="SAM" id="MobiDB-lite"/>
    </source>
</evidence>
<protein>
    <recommendedName>
        <fullName evidence="1">Chaperone protein DnaK</fullName>
    </recommendedName>
    <alternativeName>
        <fullName evidence="1">HSP70</fullName>
    </alternativeName>
    <alternativeName>
        <fullName evidence="1">Heat shock 70 kDa protein</fullName>
    </alternativeName>
    <alternativeName>
        <fullName evidence="1">Heat shock protein 70</fullName>
    </alternativeName>
</protein>
<proteinExistence type="inferred from homology"/>
<organism>
    <name type="scientific">Beijerinckia indica subsp. indica (strain ATCC 9039 / DSM 1715 / NCIMB 8712)</name>
    <dbReference type="NCBI Taxonomy" id="395963"/>
    <lineage>
        <taxon>Bacteria</taxon>
        <taxon>Pseudomonadati</taxon>
        <taxon>Pseudomonadota</taxon>
        <taxon>Alphaproteobacteria</taxon>
        <taxon>Hyphomicrobiales</taxon>
        <taxon>Beijerinckiaceae</taxon>
        <taxon>Beijerinckia</taxon>
    </lineage>
</organism>
<accession>B2IBR4</accession>
<keyword id="KW-0067">ATP-binding</keyword>
<keyword id="KW-0143">Chaperone</keyword>
<keyword id="KW-0547">Nucleotide-binding</keyword>
<keyword id="KW-0597">Phosphoprotein</keyword>
<keyword id="KW-1185">Reference proteome</keyword>
<keyword id="KW-0346">Stress response</keyword>
<gene>
    <name evidence="1" type="primary">dnaK</name>
    <name type="ordered locus">Bind_0128</name>
</gene>
<comment type="function">
    <text evidence="1">Acts as a chaperone.</text>
</comment>
<comment type="induction">
    <text evidence="1">By stress conditions e.g. heat shock.</text>
</comment>
<comment type="similarity">
    <text evidence="1">Belongs to the heat shock protein 70 family.</text>
</comment>
<sequence length="632" mass="67609">MGKVIGIDLGTTNSCVAVMEGTTPKVIENAEGARTTPSIVAFTDDGERLVGQPAKRQGVTNPERTFFAIKRLIGRTFEDPMTKKDIGLVPYKITKAPNGDAWVEADGKPYSPSQISAFILQKMKETAESYLGQPVSQAVITVPAYFNDAQRQATKDAGKIAGLEVLRIINEPTAAALAYGLDKKGSGTIAVYDLGGGTFDVSILEIGDGVFEVKSTNGDTFLGGEDFDTRLVEYLADEFKKENGIDLKKDKLALQRLKEAAEKAKIELSSATQTEINLPYITADATGPKHLALKLTRAKFEALVDDLIQKTVEPCRKALKDAGLSAGEVDEVVLVGGMTRMPKVQEIVKQFFGKEPHKGVNPDEVVAIGAAVQAGVLQGDVKDVLLLDVTPLSLGIETLGGVFTRLIDRNTTIPTKKSQVFSTAEDNQTAVTIRVFQGEREMAADNKLLGQFDLVGIPGAPRGVPQIEVTFDIDANGIVNVTAKDKATNKEQQIRIQASGGLSEADIDKMVKEAEQHAAEDKVRRELVDAKNHGEAIIHSTEKSLAEFGTKVAESDKSTIDAAIAALKTELAGENLEGIKAKTDALVQASMKLGEAMYKAGAEGGESAEAPKDDVIDADFKEVGPDDHKKSA</sequence>